<reference key="1">
    <citation type="journal article" date="2004" name="Genome Res.">
        <title>The complete genome and proteome of Mycoplasma mobile.</title>
        <authorList>
            <person name="Jaffe J.D."/>
            <person name="Stange-Thomann N."/>
            <person name="Smith C."/>
            <person name="DeCaprio D."/>
            <person name="Fisher S."/>
            <person name="Butler J."/>
            <person name="Calvo S."/>
            <person name="Elkins T."/>
            <person name="FitzGerald M.G."/>
            <person name="Hafez N."/>
            <person name="Kodira C.D."/>
            <person name="Major J."/>
            <person name="Wang S."/>
            <person name="Wilkinson J."/>
            <person name="Nicol R."/>
            <person name="Nusbaum C."/>
            <person name="Birren B."/>
            <person name="Berg H.C."/>
            <person name="Church G.M."/>
        </authorList>
    </citation>
    <scope>NUCLEOTIDE SEQUENCE [LARGE SCALE GENOMIC DNA]</scope>
    <source>
        <strain>ATCC 43663 / NCTC 11711 / 163 K</strain>
    </source>
</reference>
<name>RS15_MYCM1</name>
<sequence>MVSNTKKLELIKSFGKNEKDSGSIEAQIAILTEDIESLKLHFEKNKKDLHSRRGFIAKINHRKKLLAYLRKNKFTSYASLIEKLNIRK</sequence>
<dbReference type="EMBL" id="AE017308">
    <property type="protein sequence ID" value="AAT27955.1"/>
    <property type="molecule type" value="Genomic_DNA"/>
</dbReference>
<dbReference type="RefSeq" id="WP_011264989.1">
    <property type="nucleotide sequence ID" value="NC_006908.1"/>
</dbReference>
<dbReference type="SMR" id="Q6KHH5"/>
<dbReference type="STRING" id="267748.MMOB4690"/>
<dbReference type="KEGG" id="mmo:MMOB4690"/>
<dbReference type="eggNOG" id="COG0184">
    <property type="taxonomic scope" value="Bacteria"/>
</dbReference>
<dbReference type="HOGENOM" id="CLU_148518_0_0_14"/>
<dbReference type="OrthoDB" id="9799262at2"/>
<dbReference type="Proteomes" id="UP000009072">
    <property type="component" value="Chromosome"/>
</dbReference>
<dbReference type="GO" id="GO:0022627">
    <property type="term" value="C:cytosolic small ribosomal subunit"/>
    <property type="evidence" value="ECO:0007669"/>
    <property type="project" value="TreeGrafter"/>
</dbReference>
<dbReference type="GO" id="GO:0019843">
    <property type="term" value="F:rRNA binding"/>
    <property type="evidence" value="ECO:0007669"/>
    <property type="project" value="UniProtKB-UniRule"/>
</dbReference>
<dbReference type="GO" id="GO:0003735">
    <property type="term" value="F:structural constituent of ribosome"/>
    <property type="evidence" value="ECO:0007669"/>
    <property type="project" value="InterPro"/>
</dbReference>
<dbReference type="GO" id="GO:0006412">
    <property type="term" value="P:translation"/>
    <property type="evidence" value="ECO:0007669"/>
    <property type="project" value="UniProtKB-UniRule"/>
</dbReference>
<dbReference type="CDD" id="cd00353">
    <property type="entry name" value="Ribosomal_S15p_S13e"/>
    <property type="match status" value="1"/>
</dbReference>
<dbReference type="Gene3D" id="6.10.250.3130">
    <property type="match status" value="1"/>
</dbReference>
<dbReference type="Gene3D" id="1.10.287.10">
    <property type="entry name" value="S15/NS1, RNA-binding"/>
    <property type="match status" value="1"/>
</dbReference>
<dbReference type="HAMAP" id="MF_01343_B">
    <property type="entry name" value="Ribosomal_uS15_B"/>
    <property type="match status" value="1"/>
</dbReference>
<dbReference type="InterPro" id="IPR000589">
    <property type="entry name" value="Ribosomal_uS15"/>
</dbReference>
<dbReference type="InterPro" id="IPR005290">
    <property type="entry name" value="Ribosomal_uS15_bac-type"/>
</dbReference>
<dbReference type="InterPro" id="IPR009068">
    <property type="entry name" value="uS15_NS1_RNA-bd_sf"/>
</dbReference>
<dbReference type="NCBIfam" id="TIGR00952">
    <property type="entry name" value="S15_bact"/>
    <property type="match status" value="1"/>
</dbReference>
<dbReference type="PANTHER" id="PTHR23321">
    <property type="entry name" value="RIBOSOMAL PROTEIN S15, BACTERIAL AND ORGANELLAR"/>
    <property type="match status" value="1"/>
</dbReference>
<dbReference type="PANTHER" id="PTHR23321:SF26">
    <property type="entry name" value="SMALL RIBOSOMAL SUBUNIT PROTEIN US15M"/>
    <property type="match status" value="1"/>
</dbReference>
<dbReference type="Pfam" id="PF00312">
    <property type="entry name" value="Ribosomal_S15"/>
    <property type="match status" value="1"/>
</dbReference>
<dbReference type="SMART" id="SM01387">
    <property type="entry name" value="Ribosomal_S15"/>
    <property type="match status" value="1"/>
</dbReference>
<dbReference type="SUPFAM" id="SSF47060">
    <property type="entry name" value="S15/NS1 RNA-binding domain"/>
    <property type="match status" value="1"/>
</dbReference>
<dbReference type="PROSITE" id="PS00362">
    <property type="entry name" value="RIBOSOMAL_S15"/>
    <property type="match status" value="1"/>
</dbReference>
<accession>Q6KHH5</accession>
<evidence type="ECO:0000255" key="1">
    <source>
        <dbReference type="HAMAP-Rule" id="MF_01343"/>
    </source>
</evidence>
<evidence type="ECO:0000305" key="2"/>
<keyword id="KW-1185">Reference proteome</keyword>
<keyword id="KW-0687">Ribonucleoprotein</keyword>
<keyword id="KW-0689">Ribosomal protein</keyword>
<keyword id="KW-0694">RNA-binding</keyword>
<keyword id="KW-0699">rRNA-binding</keyword>
<comment type="function">
    <text evidence="1">One of the primary rRNA binding proteins, it binds directly to 16S rRNA where it helps nucleate assembly of the platform of the 30S subunit by binding and bridging several RNA helices of the 16S rRNA.</text>
</comment>
<comment type="function">
    <text evidence="1">Forms an intersubunit bridge (bridge B4) with the 23S rRNA of the 50S subunit in the ribosome.</text>
</comment>
<comment type="subunit">
    <text evidence="1">Part of the 30S ribosomal subunit. Forms a bridge to the 50S subunit in the 70S ribosome, contacting the 23S rRNA.</text>
</comment>
<comment type="similarity">
    <text evidence="1">Belongs to the universal ribosomal protein uS15 family.</text>
</comment>
<organism>
    <name type="scientific">Mycoplasma mobile (strain ATCC 43663 / 163K / NCTC 11711)</name>
    <name type="common">Mesomycoplasma mobile</name>
    <dbReference type="NCBI Taxonomy" id="267748"/>
    <lineage>
        <taxon>Bacteria</taxon>
        <taxon>Bacillati</taxon>
        <taxon>Mycoplasmatota</taxon>
        <taxon>Mycoplasmoidales</taxon>
        <taxon>Metamycoplasmataceae</taxon>
        <taxon>Mesomycoplasma</taxon>
    </lineage>
</organism>
<proteinExistence type="inferred from homology"/>
<gene>
    <name evidence="1" type="primary">rpsO</name>
    <name type="ordered locus">MMOB4690</name>
</gene>
<protein>
    <recommendedName>
        <fullName evidence="1">Small ribosomal subunit protein uS15</fullName>
    </recommendedName>
    <alternativeName>
        <fullName evidence="2">30S ribosomal protein S15</fullName>
    </alternativeName>
</protein>
<feature type="chain" id="PRO_0000115481" description="Small ribosomal subunit protein uS15">
    <location>
        <begin position="1"/>
        <end position="88"/>
    </location>
</feature>